<comment type="function">
    <text evidence="3 4">Translation elongation factor that catalyzes the GTP-dependent binding of aminoacyl-tRNA (aa-tRNA) to the A-site of ribosomes during the elongation phase of protein synthesis. Base pairing between the mRNA codon and the aa-tRNA anticodon promotes GTP hydrolysis, releasing the aa-tRNA from EEF1A1 and allowing its accommodation into the ribosome. The growing protein chain is subsequently transferred from the P-site peptidyl tRNA to the A-site aa-tRNA, extending it by one amino acid through ribosome-catalyzed peptide bond formation. Also plays a role in the positive regulation of IFNG transcription in T-helper 1 cells as part of an IFNG promoter-binding complex with TXK and PARP1 (By similarity). Also plays a role in cytoskeleton organization by promoting actin bundling (By similarity).</text>
</comment>
<comment type="catalytic activity">
    <reaction evidence="3">
        <text>GTP + H2O = GDP + phosphate + H(+)</text>
        <dbReference type="Rhea" id="RHEA:19669"/>
        <dbReference type="ChEBI" id="CHEBI:15377"/>
        <dbReference type="ChEBI" id="CHEBI:15378"/>
        <dbReference type="ChEBI" id="CHEBI:37565"/>
        <dbReference type="ChEBI" id="CHEBI:43474"/>
        <dbReference type="ChEBI" id="CHEBI:58189"/>
    </reaction>
    <physiologicalReaction direction="left-to-right" evidence="3">
        <dbReference type="Rhea" id="RHEA:19670"/>
    </physiologicalReaction>
</comment>
<comment type="subunit">
    <text evidence="2 3">Found in a nuclear export complex with XPO5, EEF1A1, Ran and aminoacylated tRNA. Interacts with PARP1 and TXK. Interacts with KARS1. May interact with ERGIC2. Interacts with IFIT1 (via TPR repeats 4-7) (By similarity). Interacts with DLC1, facilitating distribution to the membrane periphery and ruffles upon growth factor stimulation. Interacts with ZPR1; the interaction occurs in a epidermal growth factor (EGF)-dependent manner (By similarity). Interacts with PPP1R16B (By similarity). Interacts with SPHK1 and SPHK2; both interactions increase SPHK1 and SPHK2 kinase activity (By similarity). Interacts with guanyl-nucleotide exchange factor EEF1B2 (By similarity). Interacts (via middle-region) with HTATIP2 (via N-terminus); the interaction is direct and competes with EEF1A1 binding to guanyl-nucleotide exchange factor EEF1B2, thereby inhibiting GDP for GTP exchange and reactivation of EEF1A1 (By similarity). Interacts with tRNA (By similarity).</text>
</comment>
<comment type="subcellular location">
    <subcellularLocation>
        <location evidence="3">Cytoplasm</location>
    </subcellularLocation>
    <subcellularLocation>
        <location evidence="3">Nucleus</location>
    </subcellularLocation>
    <subcellularLocation>
        <location evidence="3">Nucleus</location>
        <location evidence="3">Nucleolus</location>
    </subcellularLocation>
    <subcellularLocation>
        <location evidence="3">Cell membrane</location>
    </subcellularLocation>
    <text evidence="3">Colocalizes with DLC1 at actin-rich regions in the cell periphery. Translocates together with ZPR1 from the cytoplasm to the nucleus and nucleolus after treatment with mitogens. Localization at the cell membrane depends on EEF1A1 phosphorylation status and the presence of PPP1R16B.</text>
</comment>
<comment type="PTM">
    <text evidence="3">ISGylated.</text>
</comment>
<comment type="PTM">
    <text evidence="3">Phosphorylated by TXK. Phosphorylation by PASK increases translation efficiency. Phosphorylated by ROCK2. Phosphorylation by TGFBR1 inhibits translation elongation.</text>
</comment>
<comment type="PTM">
    <text evidence="3">Trimethylated at Lys-79 by EEF1AKMT1. Methylated at Lys-165 by EEF1AKMT3, methylation by EEF1AKMT3 is dynamic as well as inducible by stress conditions, such as ER-stress, and plays a regulatory role on mRNA translation. Trimethylated at Lys-318 by EEF1AKMT2. Mono-, di-, and trimethylated at Lys-36 by EEF1AKMT4; trimethylated form is predominant. Methylation by EEF1AKMT4 contributes to the fine-tuning of translation rates for a subset of tRNAs. Trimethylated at Gly-2 by METTL13. Mono- and dimethylated at Lys-55 by METTL13; dimethylated form is predominant.</text>
</comment>
<comment type="PTM">
    <text evidence="3">Ubiquitinated at Lys-385 by RNF14 in response to ribosome collisions (ribosome stalling), leading to its degradation by the proteasome and rescue of stalled ribosomes.</text>
</comment>
<comment type="similarity">
    <text evidence="6">Belongs to the TRAFAC class translation factor GTPase superfamily. Classic translation factor GTPase family. EF-Tu/EF-1A subfamily.</text>
</comment>
<name>EF1A1_FELCA</name>
<feature type="initiator methionine" description="Removed" evidence="3">
    <location>
        <position position="1"/>
    </location>
</feature>
<feature type="chain" id="PRO_0000090884" description="Elongation factor 1-alpha 1">
    <location>
        <begin position="2"/>
        <end position="462"/>
    </location>
</feature>
<feature type="domain" description="tr-type G">
    <location>
        <begin position="5"/>
        <end position="242"/>
    </location>
</feature>
<feature type="region of interest" description="G1" evidence="5">
    <location>
        <begin position="14"/>
        <end position="21"/>
    </location>
</feature>
<feature type="region of interest" description="G2" evidence="5">
    <location>
        <begin position="70"/>
        <end position="74"/>
    </location>
</feature>
<feature type="region of interest" description="G3" evidence="5">
    <location>
        <begin position="91"/>
        <end position="94"/>
    </location>
</feature>
<feature type="region of interest" description="G4" evidence="5">
    <location>
        <begin position="153"/>
        <end position="156"/>
    </location>
</feature>
<feature type="region of interest" description="G5" evidence="5">
    <location>
        <begin position="194"/>
        <end position="196"/>
    </location>
</feature>
<feature type="binding site" evidence="4">
    <location>
        <begin position="14"/>
        <end position="21"/>
    </location>
    <ligand>
        <name>GTP</name>
        <dbReference type="ChEBI" id="CHEBI:37565"/>
    </ligand>
</feature>
<feature type="binding site" evidence="4">
    <location>
        <begin position="153"/>
        <end position="156"/>
    </location>
    <ligand>
        <name>GTP</name>
        <dbReference type="ChEBI" id="CHEBI:37565"/>
    </ligand>
</feature>
<feature type="binding site" evidence="4">
    <location>
        <begin position="194"/>
        <end position="196"/>
    </location>
    <ligand>
        <name>GTP</name>
        <dbReference type="ChEBI" id="CHEBI:37565"/>
    </ligand>
</feature>
<feature type="modified residue" description="N,N,N-trimethylglycine" evidence="3">
    <location>
        <position position="2"/>
    </location>
</feature>
<feature type="modified residue" description="N6,N6,N6-trimethyllysine; alternate" evidence="3">
    <location>
        <position position="36"/>
    </location>
</feature>
<feature type="modified residue" description="N6,N6-dimethyllysine; alternate" evidence="3">
    <location>
        <position position="36"/>
    </location>
</feature>
<feature type="modified residue" description="N6-methyllysine; alternate" evidence="3">
    <location>
        <position position="36"/>
    </location>
</feature>
<feature type="modified residue" description="N6,N6-dimethyllysine" evidence="3">
    <location>
        <position position="55"/>
    </location>
</feature>
<feature type="modified residue" description="N6,N6,N6-trimethyllysine; by EEF1AKMT1" evidence="3">
    <location>
        <position position="79"/>
    </location>
</feature>
<feature type="modified residue" description="N6,N6,N6-trimethyllysine; alternate; by EEF1AKMT3" evidence="3">
    <location>
        <position position="165"/>
    </location>
</feature>
<feature type="modified residue" description="N6,N6-dimethyllysine; alternate; by EEF1AKMT3" evidence="3">
    <location>
        <position position="165"/>
    </location>
</feature>
<feature type="modified residue" description="N6-acetyllysine; alternate" evidence="1">
    <location>
        <position position="165"/>
    </location>
</feature>
<feature type="modified residue" description="N6-methyllysine; alternate; by EEF1AKMT3" evidence="3">
    <location>
        <position position="165"/>
    </location>
</feature>
<feature type="modified residue" description="N6-acetyllysine" evidence="1">
    <location>
        <position position="172"/>
    </location>
</feature>
<feature type="modified residue" description="N6-acetyllysine" evidence="1">
    <location>
        <position position="273"/>
    </location>
</feature>
<feature type="modified residue" description="Phosphoserine; by TGFBR1" evidence="3">
    <location>
        <position position="300"/>
    </location>
</feature>
<feature type="modified residue" description="5-glutamyl glycerylphosphorylethanolamine" evidence="3">
    <location>
        <position position="301"/>
    </location>
</feature>
<feature type="modified residue" description="N6,N6,N6-trimethyllysine; by EEF1AKMT2" evidence="3">
    <location>
        <position position="318"/>
    </location>
</feature>
<feature type="modified residue" description="5-glutamyl glycerylphosphorylethanolamine" evidence="3">
    <location>
        <position position="374"/>
    </location>
</feature>
<feature type="modified residue" description="N6-acetyllysine; alternate" evidence="1">
    <location>
        <position position="392"/>
    </location>
</feature>
<feature type="modified residue" description="N6-succinyllysine; alternate" evidence="1">
    <location>
        <position position="392"/>
    </location>
</feature>
<feature type="modified residue" description="Phosphothreonine; by PASK" evidence="3">
    <location>
        <position position="432"/>
    </location>
</feature>
<feature type="modified residue" description="N6-acetyllysine" evidence="1">
    <location>
        <position position="439"/>
    </location>
</feature>
<feature type="cross-link" description="Glycyl lysine isopeptide (Lys-Gly) (interchain with G-Cter in ubiquitin)" evidence="3">
    <location>
        <position position="385"/>
    </location>
</feature>
<dbReference type="EC" id="3.6.5.-" evidence="3"/>
<dbReference type="EMBL" id="AY712790">
    <property type="protein sequence ID" value="AAU10465.1"/>
    <property type="molecule type" value="mRNA"/>
</dbReference>
<dbReference type="RefSeq" id="NP_001009326.1">
    <property type="nucleotide sequence ID" value="NM_001009326.1"/>
</dbReference>
<dbReference type="RefSeq" id="XP_006931902.1">
    <property type="nucleotide sequence ID" value="XM_006931840.5"/>
</dbReference>
<dbReference type="RefSeq" id="XP_019685628.1">
    <property type="nucleotide sequence ID" value="XM_019830069.1"/>
</dbReference>
<dbReference type="SMR" id="Q66RN5"/>
<dbReference type="FunCoup" id="Q66RN5">
    <property type="interactions" value="112"/>
</dbReference>
<dbReference type="STRING" id="9685.ENSFCAP00000024974"/>
<dbReference type="PaxDb" id="9685-ENSFCAP00000024974"/>
<dbReference type="Ensembl" id="ENSFCAT00000031196.4">
    <property type="protein sequence ID" value="ENSFCAP00000024974.1"/>
    <property type="gene ID" value="ENSFCAG00000030977.4"/>
</dbReference>
<dbReference type="GeneID" id="493922"/>
<dbReference type="KEGG" id="fca:493922"/>
<dbReference type="CTD" id="1915"/>
<dbReference type="eggNOG" id="KOG0052">
    <property type="taxonomic scope" value="Eukaryota"/>
</dbReference>
<dbReference type="GeneTree" id="ENSGT00950000183029"/>
<dbReference type="HOGENOM" id="CLU_007265_3_5_1"/>
<dbReference type="InParanoid" id="Q66RN5"/>
<dbReference type="OMA" id="SPPCYTP"/>
<dbReference type="OrthoDB" id="9729002at2759"/>
<dbReference type="Proteomes" id="UP000011712">
    <property type="component" value="Chromosome B2"/>
</dbReference>
<dbReference type="Bgee" id="ENSFCAG00000030977">
    <property type="expression patterns" value="Expressed in embryo and 11 other cell types or tissues"/>
</dbReference>
<dbReference type="GO" id="GO:0005737">
    <property type="term" value="C:cytoplasm"/>
    <property type="evidence" value="ECO:0000250"/>
    <property type="project" value="UniProtKB"/>
</dbReference>
<dbReference type="GO" id="GO:0005730">
    <property type="term" value="C:nucleolus"/>
    <property type="evidence" value="ECO:0000250"/>
    <property type="project" value="UniProtKB"/>
</dbReference>
<dbReference type="GO" id="GO:0005634">
    <property type="term" value="C:nucleus"/>
    <property type="evidence" value="ECO:0000250"/>
    <property type="project" value="UniProtKB"/>
</dbReference>
<dbReference type="GO" id="GO:0005886">
    <property type="term" value="C:plasma membrane"/>
    <property type="evidence" value="ECO:0000250"/>
    <property type="project" value="UniProtKB"/>
</dbReference>
<dbReference type="GO" id="GO:0005516">
    <property type="term" value="F:calmodulin binding"/>
    <property type="evidence" value="ECO:0007669"/>
    <property type="project" value="Ensembl"/>
</dbReference>
<dbReference type="GO" id="GO:0005525">
    <property type="term" value="F:GTP binding"/>
    <property type="evidence" value="ECO:0007669"/>
    <property type="project" value="UniProtKB-KW"/>
</dbReference>
<dbReference type="GO" id="GO:0003924">
    <property type="term" value="F:GTPase activity"/>
    <property type="evidence" value="ECO:0000250"/>
    <property type="project" value="UniProtKB"/>
</dbReference>
<dbReference type="GO" id="GO:0019209">
    <property type="term" value="F:kinase activator activity"/>
    <property type="evidence" value="ECO:0000250"/>
    <property type="project" value="UniProtKB"/>
</dbReference>
<dbReference type="GO" id="GO:0003746">
    <property type="term" value="F:translation elongation factor activity"/>
    <property type="evidence" value="ECO:0000250"/>
    <property type="project" value="UniProtKB"/>
</dbReference>
<dbReference type="GO" id="GO:0071364">
    <property type="term" value="P:cellular response to epidermal growth factor stimulus"/>
    <property type="evidence" value="ECO:0000250"/>
    <property type="project" value="UniProtKB"/>
</dbReference>
<dbReference type="GO" id="GO:0006412">
    <property type="term" value="P:translation"/>
    <property type="evidence" value="ECO:0000318"/>
    <property type="project" value="GO_Central"/>
</dbReference>
<dbReference type="GO" id="GO:0006414">
    <property type="term" value="P:translational elongation"/>
    <property type="evidence" value="ECO:0000250"/>
    <property type="project" value="UniProtKB"/>
</dbReference>
<dbReference type="CDD" id="cd01883">
    <property type="entry name" value="EF1_alpha"/>
    <property type="match status" value="1"/>
</dbReference>
<dbReference type="CDD" id="cd03693">
    <property type="entry name" value="EF1_alpha_II"/>
    <property type="match status" value="1"/>
</dbReference>
<dbReference type="CDD" id="cd03705">
    <property type="entry name" value="EF1_alpha_III"/>
    <property type="match status" value="1"/>
</dbReference>
<dbReference type="FunFam" id="2.40.30.10:FF:000005">
    <property type="entry name" value="Elongation factor 1-alpha"/>
    <property type="match status" value="1"/>
</dbReference>
<dbReference type="FunFam" id="3.40.50.300:FF:000090">
    <property type="entry name" value="Elongation factor 1-alpha"/>
    <property type="match status" value="1"/>
</dbReference>
<dbReference type="FunFam" id="2.40.30.10:FF:000168">
    <property type="entry name" value="Elongation factor 1-alpha 2"/>
    <property type="match status" value="1"/>
</dbReference>
<dbReference type="Gene3D" id="3.40.50.300">
    <property type="entry name" value="P-loop containing nucleotide triphosphate hydrolases"/>
    <property type="match status" value="1"/>
</dbReference>
<dbReference type="Gene3D" id="2.40.30.10">
    <property type="entry name" value="Translation factors"/>
    <property type="match status" value="2"/>
</dbReference>
<dbReference type="HAMAP" id="MF_00118_A">
    <property type="entry name" value="EF_Tu_A"/>
    <property type="match status" value="1"/>
</dbReference>
<dbReference type="InterPro" id="IPR004161">
    <property type="entry name" value="EFTu-like_2"/>
</dbReference>
<dbReference type="InterPro" id="IPR031157">
    <property type="entry name" value="G_TR_CS"/>
</dbReference>
<dbReference type="InterPro" id="IPR054696">
    <property type="entry name" value="GTP-eEF1A_C"/>
</dbReference>
<dbReference type="InterPro" id="IPR027417">
    <property type="entry name" value="P-loop_NTPase"/>
</dbReference>
<dbReference type="InterPro" id="IPR000795">
    <property type="entry name" value="T_Tr_GTP-bd_dom"/>
</dbReference>
<dbReference type="InterPro" id="IPR050100">
    <property type="entry name" value="TRAFAC_GTPase_members"/>
</dbReference>
<dbReference type="InterPro" id="IPR009000">
    <property type="entry name" value="Transl_B-barrel_sf"/>
</dbReference>
<dbReference type="InterPro" id="IPR009001">
    <property type="entry name" value="Transl_elong_EF1A/Init_IF2_C"/>
</dbReference>
<dbReference type="InterPro" id="IPR004539">
    <property type="entry name" value="Transl_elong_EF1A_euk/arc"/>
</dbReference>
<dbReference type="NCBIfam" id="TIGR00483">
    <property type="entry name" value="EF-1_alpha"/>
    <property type="match status" value="1"/>
</dbReference>
<dbReference type="NCBIfam" id="NF008969">
    <property type="entry name" value="PRK12317.1"/>
    <property type="match status" value="1"/>
</dbReference>
<dbReference type="PANTHER" id="PTHR23115">
    <property type="entry name" value="TRANSLATION FACTOR"/>
    <property type="match status" value="1"/>
</dbReference>
<dbReference type="Pfam" id="PF22594">
    <property type="entry name" value="GTP-eEF1A_C"/>
    <property type="match status" value="1"/>
</dbReference>
<dbReference type="Pfam" id="PF00009">
    <property type="entry name" value="GTP_EFTU"/>
    <property type="match status" value="1"/>
</dbReference>
<dbReference type="Pfam" id="PF03144">
    <property type="entry name" value="GTP_EFTU_D2"/>
    <property type="match status" value="1"/>
</dbReference>
<dbReference type="PRINTS" id="PR00315">
    <property type="entry name" value="ELONGATNFCT"/>
</dbReference>
<dbReference type="SUPFAM" id="SSF50465">
    <property type="entry name" value="EF-Tu/eEF-1alpha/eIF2-gamma C-terminal domain"/>
    <property type="match status" value="1"/>
</dbReference>
<dbReference type="SUPFAM" id="SSF52540">
    <property type="entry name" value="P-loop containing nucleoside triphosphate hydrolases"/>
    <property type="match status" value="1"/>
</dbReference>
<dbReference type="SUPFAM" id="SSF50447">
    <property type="entry name" value="Translation proteins"/>
    <property type="match status" value="1"/>
</dbReference>
<dbReference type="PROSITE" id="PS00301">
    <property type="entry name" value="G_TR_1"/>
    <property type="match status" value="1"/>
</dbReference>
<dbReference type="PROSITE" id="PS51722">
    <property type="entry name" value="G_TR_2"/>
    <property type="match status" value="1"/>
</dbReference>
<reference key="1">
    <citation type="submission" date="2004-08" db="EMBL/GenBank/DDBJ databases">
        <authorList>
            <person name="Pathak S."/>
            <person name="Kapil S."/>
        </authorList>
    </citation>
    <scope>NUCLEOTIDE SEQUENCE [MRNA]</scope>
</reference>
<protein>
    <recommendedName>
        <fullName>Elongation factor 1-alpha 1</fullName>
        <shortName>EF-1-alpha-1</shortName>
        <ecNumber evidence="3">3.6.5.-</ecNumber>
    </recommendedName>
    <alternativeName>
        <fullName>Elongation factor Tu</fullName>
        <shortName>EF-Tu</shortName>
    </alternativeName>
    <alternativeName>
        <fullName>Eukaryotic elongation factor 1 A-1</fullName>
        <shortName>eEF1A-1</shortName>
    </alternativeName>
</protein>
<proteinExistence type="evidence at transcript level"/>
<keyword id="KW-0007">Acetylation</keyword>
<keyword id="KW-1003">Cell membrane</keyword>
<keyword id="KW-0963">Cytoplasm</keyword>
<keyword id="KW-0251">Elongation factor</keyword>
<keyword id="KW-0342">GTP-binding</keyword>
<keyword id="KW-0378">Hydrolase</keyword>
<keyword id="KW-1017">Isopeptide bond</keyword>
<keyword id="KW-0472">Membrane</keyword>
<keyword id="KW-0488">Methylation</keyword>
<keyword id="KW-0547">Nucleotide-binding</keyword>
<keyword id="KW-0539">Nucleus</keyword>
<keyword id="KW-0597">Phosphoprotein</keyword>
<keyword id="KW-0648">Protein biosynthesis</keyword>
<keyword id="KW-1185">Reference proteome</keyword>
<keyword id="KW-0832">Ubl conjugation</keyword>
<sequence>MGKEKTHINIVVIGHVDSGKSTTTGHLIYKCGGIDKRTIEKFEKEAAEMGKGSFKYAWVLDKLKAERERGITIDISLWKFETSKYYVTIIDAPGHRDFIKNMITGTSQADCAVLIVAAGVGEFEAGISKNGQTREHALLAYTLGVKQLIVGVNKMDSTEPPYSQKRYEEIVKEVSTYIKKIGYNPDTVAFVPISGWNGDNMLEPSANMPWFKGWKVTRKDGNASGTTLLEALDCILPPTRPTDKPLRLPLQDVYKIGGIGTVPVGRVETGVLKPGMVVTFAPVNVTTEVKSVEMHHEALSEALPGDNVGFNVKNVSVKDVRRGNVAGDSKNDPPMEAAGFTAQVIILNHPGQISAGYAPVLDCHTAHIACKFAELKEKIDRRSGKKLEDGPKFLKSGDAAIVDMVPGKPMCVESFSDYPPLGRFAVRDMRQTVAVGVIKAVDKKAAGAGKVTKSAQKAQKAK</sequence>
<gene>
    <name type="primary">EEF1A1</name>
    <name type="synonym">EEF1A</name>
</gene>
<accession>Q66RN5</accession>
<evidence type="ECO:0000250" key="1">
    <source>
        <dbReference type="UniProtKB" id="P10126"/>
    </source>
</evidence>
<evidence type="ECO:0000250" key="2">
    <source>
        <dbReference type="UniProtKB" id="P62630"/>
    </source>
</evidence>
<evidence type="ECO:0000250" key="3">
    <source>
        <dbReference type="UniProtKB" id="P68104"/>
    </source>
</evidence>
<evidence type="ECO:0000250" key="4">
    <source>
        <dbReference type="UniProtKB" id="P68105"/>
    </source>
</evidence>
<evidence type="ECO:0000255" key="5"/>
<evidence type="ECO:0000305" key="6"/>
<organism>
    <name type="scientific">Felis catus</name>
    <name type="common">Cat</name>
    <name type="synonym">Felis silvestris catus</name>
    <dbReference type="NCBI Taxonomy" id="9685"/>
    <lineage>
        <taxon>Eukaryota</taxon>
        <taxon>Metazoa</taxon>
        <taxon>Chordata</taxon>
        <taxon>Craniata</taxon>
        <taxon>Vertebrata</taxon>
        <taxon>Euteleostomi</taxon>
        <taxon>Mammalia</taxon>
        <taxon>Eutheria</taxon>
        <taxon>Laurasiatheria</taxon>
        <taxon>Carnivora</taxon>
        <taxon>Feliformia</taxon>
        <taxon>Felidae</taxon>
        <taxon>Felinae</taxon>
        <taxon>Felis</taxon>
    </lineage>
</organism>